<proteinExistence type="evidence at protein level"/>
<accession>P01738</accession>
<comment type="miscellaneous">
    <text>This clone was isolated from a cytotoxic T lymphocyte.</text>
</comment>
<organism>
    <name type="scientific">Mus musculus</name>
    <name type="common">Mouse</name>
    <dbReference type="NCBI Taxonomy" id="10090"/>
    <lineage>
        <taxon>Eukaryota</taxon>
        <taxon>Metazoa</taxon>
        <taxon>Chordata</taxon>
        <taxon>Craniata</taxon>
        <taxon>Vertebrata</taxon>
        <taxon>Euteleostomi</taxon>
        <taxon>Mammalia</taxon>
        <taxon>Eutheria</taxon>
        <taxon>Euarchontoglires</taxon>
        <taxon>Glires</taxon>
        <taxon>Rodentia</taxon>
        <taxon>Myomorpha</taxon>
        <taxon>Muroidea</taxon>
        <taxon>Muridae</taxon>
        <taxon>Murinae</taxon>
        <taxon>Mus</taxon>
        <taxon>Mus</taxon>
    </lineage>
</organism>
<feature type="signal peptide">
    <location>
        <begin position="1"/>
        <end position="20"/>
    </location>
</feature>
<feature type="chain" id="PRO_0000033591" description="T-cell receptor alpha chain V region PHDS58">
    <location>
        <begin position="21"/>
        <end position="130"/>
    </location>
</feature>
<feature type="region of interest" description="V segment">
    <location>
        <begin position="21"/>
        <end position="114"/>
    </location>
</feature>
<feature type="region of interest" description="J segment">
    <location>
        <begin position="115"/>
        <end position="130"/>
    </location>
</feature>
<feature type="glycosylation site" description="N-linked (GlcNAc...) asparagine">
    <location>
        <position position="90"/>
    </location>
</feature>
<feature type="non-terminal residue">
    <location>
        <position position="130"/>
    </location>
</feature>
<feature type="strand" evidence="2">
    <location>
        <begin position="22"/>
        <end position="24"/>
    </location>
</feature>
<feature type="strand" evidence="2">
    <location>
        <begin position="28"/>
        <end position="33"/>
    </location>
</feature>
<feature type="strand" evidence="2">
    <location>
        <begin position="38"/>
        <end position="40"/>
    </location>
</feature>
<feature type="strand" evidence="2">
    <location>
        <begin position="43"/>
        <end position="45"/>
    </location>
</feature>
<feature type="strand" evidence="2">
    <location>
        <begin position="52"/>
        <end position="57"/>
    </location>
</feature>
<feature type="strand" evidence="1">
    <location>
        <begin position="59"/>
        <end position="61"/>
    </location>
</feature>
<feature type="strand" evidence="2">
    <location>
        <begin position="64"/>
        <end position="69"/>
    </location>
</feature>
<feature type="strand" evidence="2">
    <location>
        <begin position="74"/>
        <end position="77"/>
    </location>
</feature>
<feature type="helix" evidence="2">
    <location>
        <begin position="79"/>
        <end position="81"/>
    </location>
</feature>
<feature type="strand" evidence="2">
    <location>
        <begin position="82"/>
        <end position="87"/>
    </location>
</feature>
<feature type="turn" evidence="2">
    <location>
        <begin position="88"/>
        <end position="91"/>
    </location>
</feature>
<feature type="strand" evidence="2">
    <location>
        <begin position="92"/>
        <end position="99"/>
    </location>
</feature>
<feature type="helix" evidence="2">
    <location>
        <begin position="102"/>
        <end position="104"/>
    </location>
</feature>
<feature type="strand" evidence="2">
    <location>
        <begin position="106"/>
        <end position="113"/>
    </location>
</feature>
<feature type="helix" evidence="2">
    <location>
        <begin position="115"/>
        <end position="117"/>
    </location>
</feature>
<feature type="strand" evidence="2">
    <location>
        <begin position="119"/>
        <end position="121"/>
    </location>
</feature>
<feature type="strand" evidence="2">
    <location>
        <begin position="125"/>
        <end position="130"/>
    </location>
</feature>
<protein>
    <recommendedName>
        <fullName>T-cell receptor alpha chain V region PHDS58</fullName>
    </recommendedName>
</protein>
<keyword id="KW-0002">3D-structure</keyword>
<keyword id="KW-1064">Adaptive immunity</keyword>
<keyword id="KW-0325">Glycoprotein</keyword>
<keyword id="KW-0391">Immunity</keyword>
<keyword id="KW-0393">Immunoglobulin domain</keyword>
<keyword id="KW-0675">Receptor</keyword>
<keyword id="KW-1185">Reference proteome</keyword>
<keyword id="KW-0732">Signal</keyword>
<keyword id="KW-1279">T cell receptor</keyword>
<reference key="1">
    <citation type="journal article" date="1984" name="Nature">
        <title>A third rearranged and expressed gene in a clone of cytotoxic T lymphocytes.</title>
        <authorList>
            <person name="Saito H."/>
            <person name="Kranz D.M."/>
            <person name="Takagaki Y."/>
            <person name="Hayday A.C."/>
            <person name="Eisen H.N."/>
            <person name="Tonegawa S."/>
        </authorList>
    </citation>
    <scope>NUCLEOTIDE SEQUENCE</scope>
    <source>
        <strain>BALB.B</strain>
    </source>
</reference>
<dbReference type="PIR" id="A02012">
    <property type="entry name" value="RWMS58"/>
</dbReference>
<dbReference type="PDB" id="1G6R">
    <property type="method" value="X-ray"/>
    <property type="resolution" value="2.80 A"/>
    <property type="chains" value="A/C=21-130"/>
</dbReference>
<dbReference type="PDB" id="1I9E">
    <property type="method" value="X-ray"/>
    <property type="resolution" value="2.50 A"/>
    <property type="chains" value="A=21-130"/>
</dbReference>
<dbReference type="PDB" id="1MWA">
    <property type="method" value="X-ray"/>
    <property type="resolution" value="2.40 A"/>
    <property type="chains" value="A/C=21-130"/>
</dbReference>
<dbReference type="PDB" id="1TCR">
    <property type="method" value="X-ray"/>
    <property type="resolution" value="2.50 A"/>
    <property type="chains" value="A=21-130"/>
</dbReference>
<dbReference type="PDB" id="2CKB">
    <property type="method" value="X-ray"/>
    <property type="resolution" value="3.00 A"/>
    <property type="chains" value="A/C=21-130"/>
</dbReference>
<dbReference type="PDB" id="2ICW">
    <property type="method" value="X-ray"/>
    <property type="resolution" value="2.41 A"/>
    <property type="chains" value="I/K=21-130"/>
</dbReference>
<dbReference type="PDB" id="2OI9">
    <property type="method" value="X-ray"/>
    <property type="resolution" value="2.35 A"/>
    <property type="chains" value="B=21-130"/>
</dbReference>
<dbReference type="PDB" id="3E2H">
    <property type="method" value="X-ray"/>
    <property type="resolution" value="3.80 A"/>
    <property type="chains" value="B=22-130"/>
</dbReference>
<dbReference type="PDB" id="3E3Q">
    <property type="method" value="X-ray"/>
    <property type="resolution" value="2.95 A"/>
    <property type="chains" value="C/D/I/M/R/V/Z/d=22-130"/>
</dbReference>
<dbReference type="PDB" id="4MVB">
    <property type="method" value="X-ray"/>
    <property type="resolution" value="3.09 A"/>
    <property type="chains" value="A=20-129"/>
</dbReference>
<dbReference type="PDB" id="4MXQ">
    <property type="method" value="X-ray"/>
    <property type="resolution" value="2.60 A"/>
    <property type="chains" value="C=20-113"/>
</dbReference>
<dbReference type="PDB" id="4N0C">
    <property type="method" value="X-ray"/>
    <property type="resolution" value="2.90 A"/>
    <property type="chains" value="C/G=20-129"/>
</dbReference>
<dbReference type="PDB" id="4N5E">
    <property type="method" value="X-ray"/>
    <property type="resolution" value="3.06 A"/>
    <property type="chains" value="C=20-113"/>
</dbReference>
<dbReference type="PDB" id="4NHU">
    <property type="method" value="X-ray"/>
    <property type="resolution" value="2.90 A"/>
    <property type="chains" value="A/C=21-130"/>
</dbReference>
<dbReference type="PDBsum" id="1G6R"/>
<dbReference type="PDBsum" id="1I9E"/>
<dbReference type="PDBsum" id="1MWA"/>
<dbReference type="PDBsum" id="1TCR"/>
<dbReference type="PDBsum" id="2CKB"/>
<dbReference type="PDBsum" id="2ICW"/>
<dbReference type="PDBsum" id="2OI9"/>
<dbReference type="PDBsum" id="3E2H"/>
<dbReference type="PDBsum" id="3E3Q"/>
<dbReference type="PDBsum" id="4MVB"/>
<dbReference type="PDBsum" id="4MXQ"/>
<dbReference type="PDBsum" id="4N0C"/>
<dbReference type="PDBsum" id="4N5E"/>
<dbReference type="PDBsum" id="4NHU"/>
<dbReference type="SMR" id="P01738"/>
<dbReference type="FunCoup" id="P01738">
    <property type="interactions" value="519"/>
</dbReference>
<dbReference type="MINT" id="P01738"/>
<dbReference type="GlyGen" id="P01738">
    <property type="glycosylation" value="1 site"/>
</dbReference>
<dbReference type="InParanoid" id="P01738"/>
<dbReference type="EvolutionaryTrace" id="P01738"/>
<dbReference type="Proteomes" id="UP000000589">
    <property type="component" value="Unplaced"/>
</dbReference>
<dbReference type="RNAct" id="P01738">
    <property type="molecule type" value="protein"/>
</dbReference>
<dbReference type="GO" id="GO:0042101">
    <property type="term" value="C:T cell receptor complex"/>
    <property type="evidence" value="ECO:0007669"/>
    <property type="project" value="UniProtKB-KW"/>
</dbReference>
<dbReference type="GO" id="GO:0002250">
    <property type="term" value="P:adaptive immune response"/>
    <property type="evidence" value="ECO:0007669"/>
    <property type="project" value="UniProtKB-KW"/>
</dbReference>
<dbReference type="CDD" id="cd04983">
    <property type="entry name" value="IgV_TCR_alpha"/>
    <property type="match status" value="1"/>
</dbReference>
<dbReference type="Gene3D" id="2.60.40.10">
    <property type="entry name" value="Immunoglobulins"/>
    <property type="match status" value="1"/>
</dbReference>
<dbReference type="InterPro" id="IPR007110">
    <property type="entry name" value="Ig-like_dom"/>
</dbReference>
<dbReference type="InterPro" id="IPR036179">
    <property type="entry name" value="Ig-like_dom_sf"/>
</dbReference>
<dbReference type="InterPro" id="IPR013783">
    <property type="entry name" value="Ig-like_fold"/>
</dbReference>
<dbReference type="InterPro" id="IPR003599">
    <property type="entry name" value="Ig_sub"/>
</dbReference>
<dbReference type="InterPro" id="IPR013106">
    <property type="entry name" value="Ig_V-set"/>
</dbReference>
<dbReference type="InterPro" id="IPR051287">
    <property type="entry name" value="TCR_variable_region"/>
</dbReference>
<dbReference type="PANTHER" id="PTHR19367:SF5">
    <property type="entry name" value="T CELL RECEPTOR ALPHA VARIABLE 8-3"/>
    <property type="match status" value="1"/>
</dbReference>
<dbReference type="PANTHER" id="PTHR19367">
    <property type="entry name" value="T-CELL RECEPTOR ALPHA CHAIN V REGION"/>
    <property type="match status" value="1"/>
</dbReference>
<dbReference type="Pfam" id="PF07686">
    <property type="entry name" value="V-set"/>
    <property type="match status" value="1"/>
</dbReference>
<dbReference type="SMART" id="SM00409">
    <property type="entry name" value="IG"/>
    <property type="match status" value="1"/>
</dbReference>
<dbReference type="SMART" id="SM00406">
    <property type="entry name" value="IGv"/>
    <property type="match status" value="1"/>
</dbReference>
<dbReference type="SUPFAM" id="SSF48726">
    <property type="entry name" value="Immunoglobulin"/>
    <property type="match status" value="1"/>
</dbReference>
<dbReference type="PROSITE" id="PS50835">
    <property type="entry name" value="IG_LIKE"/>
    <property type="match status" value="1"/>
</dbReference>
<name>TVA1_MOUSE</name>
<sequence length="130" mass="14320">MLLALLPVLGIHFVLRDAQAQSVTQPDARVTVSEGASLQLRCKYSYSATPYLFWYVQYPRQGLQLLLKYYSGDPVVQGVNGFEAEFSKSNSSFHLRKASVHWSDSAVYFCAVSGFASALTFGSGTKVIVL</sequence>
<evidence type="ECO:0007829" key="1">
    <source>
        <dbReference type="PDB" id="2CKB"/>
    </source>
</evidence>
<evidence type="ECO:0007829" key="2">
    <source>
        <dbReference type="PDB" id="2OI9"/>
    </source>
</evidence>